<keyword id="KW-1185">Reference proteome</keyword>
<name>Y495_TREPA</name>
<feature type="chain" id="PRO_0000202267" description="Uncharacterized protein TP_0495">
    <location>
        <begin position="1"/>
        <end position="49"/>
    </location>
</feature>
<protein>
    <recommendedName>
        <fullName>Uncharacterized protein TP_0495</fullName>
    </recommendedName>
</protein>
<proteinExistence type="predicted"/>
<dbReference type="EMBL" id="AE000520">
    <property type="protein sequence ID" value="AAC65490.1"/>
    <property type="molecule type" value="Genomic_DNA"/>
</dbReference>
<dbReference type="PIR" id="C71316">
    <property type="entry name" value="C71316"/>
</dbReference>
<dbReference type="IntAct" id="O83508">
    <property type="interactions" value="3"/>
</dbReference>
<dbReference type="STRING" id="243276.TP_0495"/>
<dbReference type="EnsemblBacteria" id="AAC65490">
    <property type="protein sequence ID" value="AAC65490"/>
    <property type="gene ID" value="TP_0495"/>
</dbReference>
<dbReference type="KEGG" id="tpa:TP_0495"/>
<dbReference type="HOGENOM" id="CLU_3141875_0_0_12"/>
<dbReference type="Proteomes" id="UP000000811">
    <property type="component" value="Chromosome"/>
</dbReference>
<accession>O83508</accession>
<gene>
    <name type="ordered locus">TP_0495</name>
</gene>
<organism>
    <name type="scientific">Treponema pallidum (strain Nichols)</name>
    <dbReference type="NCBI Taxonomy" id="243276"/>
    <lineage>
        <taxon>Bacteria</taxon>
        <taxon>Pseudomonadati</taxon>
        <taxon>Spirochaetota</taxon>
        <taxon>Spirochaetia</taxon>
        <taxon>Spirochaetales</taxon>
        <taxon>Treponemataceae</taxon>
        <taxon>Treponema</taxon>
    </lineage>
</organism>
<sequence>MLLMRLAVPFCRQNAVSSYLALSPLPKGGIFSVALAVSGTAESRCLVIN</sequence>
<reference key="1">
    <citation type="journal article" date="1998" name="Science">
        <title>Complete genome sequence of Treponema pallidum, the syphilis spirochete.</title>
        <authorList>
            <person name="Fraser C.M."/>
            <person name="Norris S.J."/>
            <person name="Weinstock G.M."/>
            <person name="White O."/>
            <person name="Sutton G.G."/>
            <person name="Dodson R.J."/>
            <person name="Gwinn M.L."/>
            <person name="Hickey E.K."/>
            <person name="Clayton R.A."/>
            <person name="Ketchum K.A."/>
            <person name="Sodergren E."/>
            <person name="Hardham J.M."/>
            <person name="McLeod M.P."/>
            <person name="Salzberg S.L."/>
            <person name="Peterson J.D."/>
            <person name="Khalak H.G."/>
            <person name="Richardson D.L."/>
            <person name="Howell J.K."/>
            <person name="Chidambaram M."/>
            <person name="Utterback T.R."/>
            <person name="McDonald L.A."/>
            <person name="Artiach P."/>
            <person name="Bowman C."/>
            <person name="Cotton M.D."/>
            <person name="Fujii C."/>
            <person name="Garland S.A."/>
            <person name="Hatch B."/>
            <person name="Horst K."/>
            <person name="Roberts K.M."/>
            <person name="Sandusky M."/>
            <person name="Weidman J.F."/>
            <person name="Smith H.O."/>
            <person name="Venter J.C."/>
        </authorList>
    </citation>
    <scope>NUCLEOTIDE SEQUENCE [LARGE SCALE GENOMIC DNA]</scope>
    <source>
        <strain>Nichols</strain>
    </source>
</reference>